<protein>
    <recommendedName>
        <fullName evidence="1">Nucleoid occlusion factor SlmA</fullName>
    </recommendedName>
</protein>
<organism>
    <name type="scientific">Vibrio cholerae serotype O1 (strain ATCC 39315 / El Tor Inaba N16961)</name>
    <dbReference type="NCBI Taxonomy" id="243277"/>
    <lineage>
        <taxon>Bacteria</taxon>
        <taxon>Pseudomonadati</taxon>
        <taxon>Pseudomonadota</taxon>
        <taxon>Gammaproteobacteria</taxon>
        <taxon>Vibrionales</taxon>
        <taxon>Vibrionaceae</taxon>
        <taxon>Vibrio</taxon>
    </lineage>
</organism>
<accession>Q9KVD2</accession>
<reference key="1">
    <citation type="journal article" date="2000" name="Nature">
        <title>DNA sequence of both chromosomes of the cholera pathogen Vibrio cholerae.</title>
        <authorList>
            <person name="Heidelberg J.F."/>
            <person name="Eisen J.A."/>
            <person name="Nelson W.C."/>
            <person name="Clayton R.A."/>
            <person name="Gwinn M.L."/>
            <person name="Dodson R.J."/>
            <person name="Haft D.H."/>
            <person name="Hickey E.K."/>
            <person name="Peterson J.D."/>
            <person name="Umayam L.A."/>
            <person name="Gill S.R."/>
            <person name="Nelson K.E."/>
            <person name="Read T.D."/>
            <person name="Tettelin H."/>
            <person name="Richardson D.L."/>
            <person name="Ermolaeva M.D."/>
            <person name="Vamathevan J.J."/>
            <person name="Bass S."/>
            <person name="Qin H."/>
            <person name="Dragoi I."/>
            <person name="Sellers P."/>
            <person name="McDonald L.A."/>
            <person name="Utterback T.R."/>
            <person name="Fleischmann R.D."/>
            <person name="Nierman W.C."/>
            <person name="White O."/>
            <person name="Salzberg S.L."/>
            <person name="Smith H.O."/>
            <person name="Colwell R.R."/>
            <person name="Mekalanos J.J."/>
            <person name="Venter J.C."/>
            <person name="Fraser C.M."/>
        </authorList>
    </citation>
    <scope>NUCLEOTIDE SEQUENCE [LARGE SCALE GENOMIC DNA]</scope>
    <source>
        <strain>ATCC 39315 / El Tor Inaba N16961</strain>
    </source>
</reference>
<keyword id="KW-0002">3D-structure</keyword>
<keyword id="KW-0131">Cell cycle</keyword>
<keyword id="KW-0132">Cell division</keyword>
<keyword id="KW-0175">Coiled coil</keyword>
<keyword id="KW-0963">Cytoplasm</keyword>
<keyword id="KW-0238">DNA-binding</keyword>
<keyword id="KW-1185">Reference proteome</keyword>
<proteinExistence type="evidence at protein level"/>
<evidence type="ECO:0000255" key="1">
    <source>
        <dbReference type="HAMAP-Rule" id="MF_01839"/>
    </source>
</evidence>
<evidence type="ECO:0000305" key="2"/>
<evidence type="ECO:0007829" key="3">
    <source>
        <dbReference type="PDB" id="4GCT"/>
    </source>
</evidence>
<evidence type="ECO:0007829" key="4">
    <source>
        <dbReference type="PDB" id="4GFK"/>
    </source>
</evidence>
<evidence type="ECO:0007829" key="5">
    <source>
        <dbReference type="PDB" id="5HAW"/>
    </source>
</evidence>
<name>SLMA_VIBCH</name>
<gene>
    <name evidence="1" type="primary">slmA</name>
    <name type="ordered locus">VC_0214</name>
</gene>
<sequence>MAGNKKINRREEILQALAEMLESNEGASRITTAKLAKQVGVSEAALYRHFPSKARMFEGLIEFIEESLMSRINRIFDEEKDTLNRIRLVMQLLLAFAERNPGLTRILSGHALMFENERLRDRINQLFERIETSLRQILRERKLREGKSFPVDENILAAQLLGQVEGSLNRFVRSDFKYLPTANFDEYWALLSAQIK</sequence>
<feature type="chain" id="PRO_0000198983" description="Nucleoid occlusion factor SlmA">
    <location>
        <begin position="1"/>
        <end position="196"/>
    </location>
</feature>
<feature type="domain" description="HTH tetR-type" evidence="1">
    <location>
        <begin position="7"/>
        <end position="68"/>
    </location>
</feature>
<feature type="DNA-binding region" description="H-T-H motif" evidence="1">
    <location>
        <begin position="31"/>
        <end position="50"/>
    </location>
</feature>
<feature type="coiled-coil region" evidence="1">
    <location>
        <begin position="110"/>
        <end position="139"/>
    </location>
</feature>
<feature type="helix" evidence="5">
    <location>
        <begin position="9"/>
        <end position="22"/>
    </location>
</feature>
<feature type="helix" evidence="5">
    <location>
        <begin position="24"/>
        <end position="27"/>
    </location>
</feature>
<feature type="helix" evidence="5">
    <location>
        <begin position="32"/>
        <end position="39"/>
    </location>
</feature>
<feature type="helix" evidence="5">
    <location>
        <begin position="43"/>
        <end position="46"/>
    </location>
</feature>
<feature type="turn" evidence="5">
    <location>
        <begin position="47"/>
        <end position="49"/>
    </location>
</feature>
<feature type="helix" evidence="5">
    <location>
        <begin position="53"/>
        <end position="78"/>
    </location>
</feature>
<feature type="helix" evidence="5">
    <location>
        <begin position="82"/>
        <end position="99"/>
    </location>
</feature>
<feature type="helix" evidence="5">
    <location>
        <begin position="101"/>
        <end position="107"/>
    </location>
</feature>
<feature type="helix" evidence="5">
    <location>
        <begin position="111"/>
        <end position="114"/>
    </location>
</feature>
<feature type="helix" evidence="5">
    <location>
        <begin position="118"/>
        <end position="139"/>
    </location>
</feature>
<feature type="helix" evidence="3">
    <location>
        <begin position="142"/>
        <end position="145"/>
    </location>
</feature>
<feature type="helix" evidence="5">
    <location>
        <begin position="153"/>
        <end position="173"/>
    </location>
</feature>
<feature type="turn" evidence="5">
    <location>
        <begin position="174"/>
        <end position="176"/>
    </location>
</feature>
<feature type="turn" evidence="5">
    <location>
        <begin position="180"/>
        <end position="183"/>
    </location>
</feature>
<feature type="helix" evidence="5">
    <location>
        <begin position="184"/>
        <end position="192"/>
    </location>
</feature>
<feature type="turn" evidence="4">
    <location>
        <begin position="193"/>
        <end position="195"/>
    </location>
</feature>
<dbReference type="EMBL" id="AE003852">
    <property type="protein sequence ID" value="AAF93390.1"/>
    <property type="status" value="ALT_INIT"/>
    <property type="molecule type" value="Genomic_DNA"/>
</dbReference>
<dbReference type="PIR" id="H82350">
    <property type="entry name" value="H82350"/>
</dbReference>
<dbReference type="RefSeq" id="NP_229871.2">
    <property type="nucleotide sequence ID" value="NC_002505.1"/>
</dbReference>
<dbReference type="RefSeq" id="WP_000918350.1">
    <property type="nucleotide sequence ID" value="NZ_LT906614.1"/>
</dbReference>
<dbReference type="PDB" id="4GCT">
    <property type="method" value="X-ray"/>
    <property type="resolution" value="2.45 A"/>
    <property type="chains" value="A/B/C/D=1-196"/>
</dbReference>
<dbReference type="PDB" id="4GFK">
    <property type="method" value="X-ray"/>
    <property type="resolution" value="1.95 A"/>
    <property type="chains" value="A/B=1-196"/>
</dbReference>
<dbReference type="PDB" id="5HAW">
    <property type="method" value="X-ray"/>
    <property type="resolution" value="1.89 A"/>
    <property type="chains" value="A/B=6-196"/>
</dbReference>
<dbReference type="PDBsum" id="4GCT"/>
<dbReference type="PDBsum" id="4GFK"/>
<dbReference type="PDBsum" id="5HAW"/>
<dbReference type="SMR" id="Q9KVD2"/>
<dbReference type="STRING" id="243277.VC_0214"/>
<dbReference type="DNASU" id="2614568"/>
<dbReference type="EnsemblBacteria" id="AAF93390">
    <property type="protein sequence ID" value="AAF93390"/>
    <property type="gene ID" value="VC_0214"/>
</dbReference>
<dbReference type="GeneID" id="88783379"/>
<dbReference type="KEGG" id="vch:VC_0214"/>
<dbReference type="PATRIC" id="fig|243277.26.peg.195"/>
<dbReference type="eggNOG" id="COG1309">
    <property type="taxonomic scope" value="Bacteria"/>
</dbReference>
<dbReference type="HOGENOM" id="CLU_069356_5_0_6"/>
<dbReference type="EvolutionaryTrace" id="Q9KVD2"/>
<dbReference type="Proteomes" id="UP000000584">
    <property type="component" value="Chromosome 1"/>
</dbReference>
<dbReference type="GO" id="GO:0043590">
    <property type="term" value="C:bacterial nucleoid"/>
    <property type="evidence" value="ECO:0007669"/>
    <property type="project" value="UniProtKB-UniRule"/>
</dbReference>
<dbReference type="GO" id="GO:0005737">
    <property type="term" value="C:cytoplasm"/>
    <property type="evidence" value="ECO:0007669"/>
    <property type="project" value="UniProtKB-UniRule"/>
</dbReference>
<dbReference type="GO" id="GO:0003700">
    <property type="term" value="F:DNA-binding transcription factor activity"/>
    <property type="evidence" value="ECO:0000318"/>
    <property type="project" value="GO_Central"/>
</dbReference>
<dbReference type="GO" id="GO:0000976">
    <property type="term" value="F:transcription cis-regulatory region binding"/>
    <property type="evidence" value="ECO:0000318"/>
    <property type="project" value="GO_Central"/>
</dbReference>
<dbReference type="GO" id="GO:0051301">
    <property type="term" value="P:cell division"/>
    <property type="evidence" value="ECO:0007669"/>
    <property type="project" value="UniProtKB-KW"/>
</dbReference>
<dbReference type="GO" id="GO:0010974">
    <property type="term" value="P:negative regulation of division septum assembly"/>
    <property type="evidence" value="ECO:0007669"/>
    <property type="project" value="InterPro"/>
</dbReference>
<dbReference type="GO" id="GO:0006355">
    <property type="term" value="P:regulation of DNA-templated transcription"/>
    <property type="evidence" value="ECO:0000318"/>
    <property type="project" value="GO_Central"/>
</dbReference>
<dbReference type="FunFam" id="1.10.357.10:FF:000002">
    <property type="entry name" value="Nucleoid occlusion factor SlmA"/>
    <property type="match status" value="1"/>
</dbReference>
<dbReference type="Gene3D" id="1.10.357.10">
    <property type="entry name" value="Tetracycline Repressor, domain 2"/>
    <property type="match status" value="1"/>
</dbReference>
<dbReference type="HAMAP" id="MF_01839">
    <property type="entry name" value="NO_factor_SlmA"/>
    <property type="match status" value="1"/>
</dbReference>
<dbReference type="InterPro" id="IPR009057">
    <property type="entry name" value="Homeodomain-like_sf"/>
</dbReference>
<dbReference type="InterPro" id="IPR050109">
    <property type="entry name" value="HTH-type_TetR-like_transc_reg"/>
</dbReference>
<dbReference type="InterPro" id="IPR001647">
    <property type="entry name" value="HTH_TetR"/>
</dbReference>
<dbReference type="InterPro" id="IPR023769">
    <property type="entry name" value="NO_SlmA"/>
</dbReference>
<dbReference type="InterPro" id="IPR054580">
    <property type="entry name" value="SlmA-like_C"/>
</dbReference>
<dbReference type="InterPro" id="IPR036271">
    <property type="entry name" value="Tet_transcr_reg_TetR-rel_C_sf"/>
</dbReference>
<dbReference type="NCBIfam" id="NF007015">
    <property type="entry name" value="PRK09480.1"/>
    <property type="match status" value="1"/>
</dbReference>
<dbReference type="PANTHER" id="PTHR30055">
    <property type="entry name" value="HTH-TYPE TRANSCRIPTIONAL REGULATOR RUTR"/>
    <property type="match status" value="1"/>
</dbReference>
<dbReference type="PANTHER" id="PTHR30055:SF183">
    <property type="entry name" value="NUCLEOID OCCLUSION FACTOR SLMA"/>
    <property type="match status" value="1"/>
</dbReference>
<dbReference type="Pfam" id="PF22276">
    <property type="entry name" value="SlmA-like_C"/>
    <property type="match status" value="1"/>
</dbReference>
<dbReference type="Pfam" id="PF00440">
    <property type="entry name" value="TetR_N"/>
    <property type="match status" value="1"/>
</dbReference>
<dbReference type="SUPFAM" id="SSF46689">
    <property type="entry name" value="Homeodomain-like"/>
    <property type="match status" value="1"/>
</dbReference>
<dbReference type="SUPFAM" id="SSF48498">
    <property type="entry name" value="Tetracyclin repressor-like, C-terminal domain"/>
    <property type="match status" value="1"/>
</dbReference>
<dbReference type="PROSITE" id="PS50977">
    <property type="entry name" value="HTH_TETR_2"/>
    <property type="match status" value="1"/>
</dbReference>
<comment type="function">
    <text evidence="1">Required for nucleoid occlusion (NO) phenomenon, which prevents Z-ring formation and cell division over the nucleoid. Acts as a DNA-associated cell division inhibitor that binds simultaneously chromosomal DNA and FtsZ, and disrupts the assembly of FtsZ polymers. SlmA-DNA-binding sequences (SBS) are dispersed on non-Ter regions of the chromosome, preventing FtsZ polymerization at these regions.</text>
</comment>
<comment type="subunit">
    <text evidence="1">Homodimer. Interacts with FtsZ.</text>
</comment>
<comment type="subcellular location">
    <subcellularLocation>
        <location evidence="1">Cytoplasm</location>
        <location evidence="1">Nucleoid</location>
    </subcellularLocation>
</comment>
<comment type="similarity">
    <text evidence="1">Belongs to the nucleoid occlusion factor SlmA family.</text>
</comment>
<comment type="sequence caution" evidence="2">
    <conflict type="erroneous initiation">
        <sequence resource="EMBL-CDS" id="AAF93390"/>
    </conflict>
</comment>